<protein>
    <recommendedName>
        <fullName evidence="1">Small ribosomal subunit protein uS13</fullName>
    </recommendedName>
    <alternativeName>
        <fullName evidence="3">30S ribosomal protein S13</fullName>
    </alternativeName>
</protein>
<sequence>MARIAGVNIPSNKRVCIALTYIYGIGRTKAGEICERTGIAENRRVNDLSDDEVVRIREIIDSEYKVEGDLRREVAMNIKRIMDLGCYRGLRHRKGLPVRGQRTHTNARTRKGPAKPIAGKKK</sequence>
<keyword id="KW-1185">Reference proteome</keyword>
<keyword id="KW-0687">Ribonucleoprotein</keyword>
<keyword id="KW-0689">Ribosomal protein</keyword>
<keyword id="KW-0694">RNA-binding</keyword>
<keyword id="KW-0699">rRNA-binding</keyword>
<keyword id="KW-0820">tRNA-binding</keyword>
<dbReference type="EMBL" id="CP000230">
    <property type="protein sequence ID" value="ABC23463.1"/>
    <property type="molecule type" value="Genomic_DNA"/>
</dbReference>
<dbReference type="RefSeq" id="WP_011390416.1">
    <property type="nucleotide sequence ID" value="NC_007643.1"/>
</dbReference>
<dbReference type="RefSeq" id="YP_427750.1">
    <property type="nucleotide sequence ID" value="NC_007643.1"/>
</dbReference>
<dbReference type="SMR" id="Q2RQY2"/>
<dbReference type="STRING" id="269796.Rru_A2666"/>
<dbReference type="EnsemblBacteria" id="ABC23463">
    <property type="protein sequence ID" value="ABC23463"/>
    <property type="gene ID" value="Rru_A2666"/>
</dbReference>
<dbReference type="KEGG" id="rru:Rru_A2666"/>
<dbReference type="PATRIC" id="fig|269796.9.peg.2773"/>
<dbReference type="eggNOG" id="COG0099">
    <property type="taxonomic scope" value="Bacteria"/>
</dbReference>
<dbReference type="HOGENOM" id="CLU_103849_1_2_5"/>
<dbReference type="PhylomeDB" id="Q2RQY2"/>
<dbReference type="Proteomes" id="UP000001929">
    <property type="component" value="Chromosome"/>
</dbReference>
<dbReference type="GO" id="GO:0005829">
    <property type="term" value="C:cytosol"/>
    <property type="evidence" value="ECO:0007669"/>
    <property type="project" value="TreeGrafter"/>
</dbReference>
<dbReference type="GO" id="GO:0015935">
    <property type="term" value="C:small ribosomal subunit"/>
    <property type="evidence" value="ECO:0007669"/>
    <property type="project" value="TreeGrafter"/>
</dbReference>
<dbReference type="GO" id="GO:0019843">
    <property type="term" value="F:rRNA binding"/>
    <property type="evidence" value="ECO:0007669"/>
    <property type="project" value="UniProtKB-UniRule"/>
</dbReference>
<dbReference type="GO" id="GO:0003735">
    <property type="term" value="F:structural constituent of ribosome"/>
    <property type="evidence" value="ECO:0007669"/>
    <property type="project" value="InterPro"/>
</dbReference>
<dbReference type="GO" id="GO:0000049">
    <property type="term" value="F:tRNA binding"/>
    <property type="evidence" value="ECO:0007669"/>
    <property type="project" value="UniProtKB-UniRule"/>
</dbReference>
<dbReference type="GO" id="GO:0006412">
    <property type="term" value="P:translation"/>
    <property type="evidence" value="ECO:0007669"/>
    <property type="project" value="UniProtKB-UniRule"/>
</dbReference>
<dbReference type="FunFam" id="1.10.8.50:FF:000001">
    <property type="entry name" value="30S ribosomal protein S13"/>
    <property type="match status" value="1"/>
</dbReference>
<dbReference type="FunFam" id="4.10.910.10:FF:000001">
    <property type="entry name" value="30S ribosomal protein S13"/>
    <property type="match status" value="1"/>
</dbReference>
<dbReference type="Gene3D" id="1.10.8.50">
    <property type="match status" value="1"/>
</dbReference>
<dbReference type="Gene3D" id="4.10.910.10">
    <property type="entry name" value="30s ribosomal protein s13, domain 2"/>
    <property type="match status" value="1"/>
</dbReference>
<dbReference type="HAMAP" id="MF_01315">
    <property type="entry name" value="Ribosomal_uS13"/>
    <property type="match status" value="1"/>
</dbReference>
<dbReference type="InterPro" id="IPR027437">
    <property type="entry name" value="Rbsml_uS13_C"/>
</dbReference>
<dbReference type="InterPro" id="IPR001892">
    <property type="entry name" value="Ribosomal_uS13"/>
</dbReference>
<dbReference type="InterPro" id="IPR010979">
    <property type="entry name" value="Ribosomal_uS13-like_H2TH"/>
</dbReference>
<dbReference type="InterPro" id="IPR019980">
    <property type="entry name" value="Ribosomal_uS13_bac-type"/>
</dbReference>
<dbReference type="InterPro" id="IPR018269">
    <property type="entry name" value="Ribosomal_uS13_CS"/>
</dbReference>
<dbReference type="NCBIfam" id="TIGR03631">
    <property type="entry name" value="uS13_bact"/>
    <property type="match status" value="1"/>
</dbReference>
<dbReference type="PANTHER" id="PTHR10871">
    <property type="entry name" value="30S RIBOSOMAL PROTEIN S13/40S RIBOSOMAL PROTEIN S18"/>
    <property type="match status" value="1"/>
</dbReference>
<dbReference type="PANTHER" id="PTHR10871:SF1">
    <property type="entry name" value="SMALL RIBOSOMAL SUBUNIT PROTEIN US13M"/>
    <property type="match status" value="1"/>
</dbReference>
<dbReference type="Pfam" id="PF00416">
    <property type="entry name" value="Ribosomal_S13"/>
    <property type="match status" value="1"/>
</dbReference>
<dbReference type="PIRSF" id="PIRSF002134">
    <property type="entry name" value="Ribosomal_S13"/>
    <property type="match status" value="1"/>
</dbReference>
<dbReference type="SUPFAM" id="SSF46946">
    <property type="entry name" value="S13-like H2TH domain"/>
    <property type="match status" value="1"/>
</dbReference>
<dbReference type="PROSITE" id="PS00646">
    <property type="entry name" value="RIBOSOMAL_S13_1"/>
    <property type="match status" value="1"/>
</dbReference>
<dbReference type="PROSITE" id="PS50159">
    <property type="entry name" value="RIBOSOMAL_S13_2"/>
    <property type="match status" value="1"/>
</dbReference>
<feature type="chain" id="PRO_0000230559" description="Small ribosomal subunit protein uS13">
    <location>
        <begin position="1"/>
        <end position="122"/>
    </location>
</feature>
<feature type="region of interest" description="Disordered" evidence="2">
    <location>
        <begin position="95"/>
        <end position="122"/>
    </location>
</feature>
<gene>
    <name evidence="1" type="primary">rpsM</name>
    <name type="ordered locus">Rru_A2666</name>
</gene>
<organism>
    <name type="scientific">Rhodospirillum rubrum (strain ATCC 11170 / ATH 1.1.1 / DSM 467 / LMG 4362 / NCIMB 8255 / S1)</name>
    <dbReference type="NCBI Taxonomy" id="269796"/>
    <lineage>
        <taxon>Bacteria</taxon>
        <taxon>Pseudomonadati</taxon>
        <taxon>Pseudomonadota</taxon>
        <taxon>Alphaproteobacteria</taxon>
        <taxon>Rhodospirillales</taxon>
        <taxon>Rhodospirillaceae</taxon>
        <taxon>Rhodospirillum</taxon>
    </lineage>
</organism>
<comment type="function">
    <text evidence="1">Located at the top of the head of the 30S subunit, it contacts several helices of the 16S rRNA. In the 70S ribosome it contacts the 23S rRNA (bridge B1a) and protein L5 of the 50S subunit (bridge B1b), connecting the 2 subunits; these bridges are implicated in subunit movement. Contacts the tRNAs in the A and P-sites.</text>
</comment>
<comment type="subunit">
    <text evidence="1">Part of the 30S ribosomal subunit. Forms a loose heterodimer with protein S19. Forms two bridges to the 50S subunit in the 70S ribosome.</text>
</comment>
<comment type="similarity">
    <text evidence="1">Belongs to the universal ribosomal protein uS13 family.</text>
</comment>
<reference key="1">
    <citation type="journal article" date="2011" name="Stand. Genomic Sci.">
        <title>Complete genome sequence of Rhodospirillum rubrum type strain (S1).</title>
        <authorList>
            <person name="Munk A.C."/>
            <person name="Copeland A."/>
            <person name="Lucas S."/>
            <person name="Lapidus A."/>
            <person name="Del Rio T.G."/>
            <person name="Barry K."/>
            <person name="Detter J.C."/>
            <person name="Hammon N."/>
            <person name="Israni S."/>
            <person name="Pitluck S."/>
            <person name="Brettin T."/>
            <person name="Bruce D."/>
            <person name="Han C."/>
            <person name="Tapia R."/>
            <person name="Gilna P."/>
            <person name="Schmutz J."/>
            <person name="Larimer F."/>
            <person name="Land M."/>
            <person name="Kyrpides N.C."/>
            <person name="Mavromatis K."/>
            <person name="Richardson P."/>
            <person name="Rohde M."/>
            <person name="Goeker M."/>
            <person name="Klenk H.P."/>
            <person name="Zhang Y."/>
            <person name="Roberts G.P."/>
            <person name="Reslewic S."/>
            <person name="Schwartz D.C."/>
        </authorList>
    </citation>
    <scope>NUCLEOTIDE SEQUENCE [LARGE SCALE GENOMIC DNA]</scope>
    <source>
        <strain>ATCC 11170 / ATH 1.1.1 / DSM 467 / LMG 4362 / NCIMB 8255 / S1</strain>
    </source>
</reference>
<name>RS13_RHORT</name>
<proteinExistence type="inferred from homology"/>
<evidence type="ECO:0000255" key="1">
    <source>
        <dbReference type="HAMAP-Rule" id="MF_01315"/>
    </source>
</evidence>
<evidence type="ECO:0000256" key="2">
    <source>
        <dbReference type="SAM" id="MobiDB-lite"/>
    </source>
</evidence>
<evidence type="ECO:0000305" key="3"/>
<accession>Q2RQY2</accession>